<proteinExistence type="evidence at transcript level"/>
<dbReference type="EMBL" id="BC046726">
    <property type="protein sequence ID" value="AAH46726.1"/>
    <property type="molecule type" value="mRNA"/>
</dbReference>
<dbReference type="SMR" id="Q7ZWS5"/>
<dbReference type="DNASU" id="379807"/>
<dbReference type="GeneID" id="379807"/>
<dbReference type="KEGG" id="xla:379807"/>
<dbReference type="AGR" id="Xenbase:XB-GENE-6254691"/>
<dbReference type="CTD" id="379807"/>
<dbReference type="Xenbase" id="XB-GENE-6254691">
    <property type="gene designation" value="samm50.L"/>
</dbReference>
<dbReference type="OrthoDB" id="1724197at2759"/>
<dbReference type="Proteomes" id="UP000186698">
    <property type="component" value="Chromosome 3L"/>
</dbReference>
<dbReference type="Bgee" id="379807">
    <property type="expression patterns" value="Expressed in muscle tissue and 20 other cell types or tissues"/>
</dbReference>
<dbReference type="GO" id="GO:0005741">
    <property type="term" value="C:mitochondrial outer membrane"/>
    <property type="evidence" value="ECO:0007669"/>
    <property type="project" value="UniProtKB-SubCell"/>
</dbReference>
<dbReference type="GO" id="GO:0042407">
    <property type="term" value="P:cristae formation"/>
    <property type="evidence" value="ECO:0000250"/>
    <property type="project" value="UniProtKB"/>
</dbReference>
<dbReference type="GO" id="GO:0033108">
    <property type="term" value="P:mitochondrial respiratory chain complex assembly"/>
    <property type="evidence" value="ECO:0000318"/>
    <property type="project" value="GO_Central"/>
</dbReference>
<dbReference type="GO" id="GO:0045040">
    <property type="term" value="P:protein insertion into mitochondrial outer membrane"/>
    <property type="evidence" value="ECO:0000318"/>
    <property type="project" value="GO_Central"/>
</dbReference>
<dbReference type="FunFam" id="2.40.160.50:FF:000002">
    <property type="entry name" value="sorting and assembly machinery component 50 homolog"/>
    <property type="match status" value="1"/>
</dbReference>
<dbReference type="FunFam" id="3.10.20.310:FF:000010">
    <property type="entry name" value="sorting and assembly machinery component 50 homolog"/>
    <property type="match status" value="1"/>
</dbReference>
<dbReference type="Gene3D" id="3.10.20.310">
    <property type="entry name" value="membrane protein fhac"/>
    <property type="match status" value="1"/>
</dbReference>
<dbReference type="Gene3D" id="2.40.160.50">
    <property type="entry name" value="membrane protein fhac: a member of the omp85/tpsb transporter family"/>
    <property type="match status" value="1"/>
</dbReference>
<dbReference type="InterPro" id="IPR000184">
    <property type="entry name" value="Bac_surfAg_D15"/>
</dbReference>
<dbReference type="InterPro" id="IPR039910">
    <property type="entry name" value="D15-like"/>
</dbReference>
<dbReference type="InterPro" id="IPR034746">
    <property type="entry name" value="POTRA"/>
</dbReference>
<dbReference type="PANTHER" id="PTHR12815:SF18">
    <property type="entry name" value="SORTING AND ASSEMBLY MACHINERY COMPONENT 50 HOMOLOG"/>
    <property type="match status" value="1"/>
</dbReference>
<dbReference type="PANTHER" id="PTHR12815">
    <property type="entry name" value="SORTING AND ASSEMBLY MACHINERY SAMM50 PROTEIN FAMILY MEMBER"/>
    <property type="match status" value="1"/>
</dbReference>
<dbReference type="Pfam" id="PF01103">
    <property type="entry name" value="Omp85"/>
    <property type="match status" value="1"/>
</dbReference>
<dbReference type="PROSITE" id="PS51779">
    <property type="entry name" value="POTRA"/>
    <property type="match status" value="1"/>
</dbReference>
<keyword id="KW-0472">Membrane</keyword>
<keyword id="KW-0496">Mitochondrion</keyword>
<keyword id="KW-1000">Mitochondrion outer membrane</keyword>
<keyword id="KW-1185">Reference proteome</keyword>
<keyword id="KW-0812">Transmembrane</keyword>
<keyword id="KW-1134">Transmembrane beta strand</keyword>
<feature type="chain" id="PRO_0000383683" description="Sorting and assembly machinery component 50 homolog A">
    <location>
        <begin position="1"/>
        <end position="468"/>
    </location>
</feature>
<feature type="domain" description="POTRA" evidence="3">
    <location>
        <begin position="44"/>
        <end position="124"/>
    </location>
</feature>
<feature type="region of interest" description="Disordered" evidence="4">
    <location>
        <begin position="1"/>
        <end position="24"/>
    </location>
</feature>
<name>SAM5A_XENLA</name>
<organism>
    <name type="scientific">Xenopus laevis</name>
    <name type="common">African clawed frog</name>
    <dbReference type="NCBI Taxonomy" id="8355"/>
    <lineage>
        <taxon>Eukaryota</taxon>
        <taxon>Metazoa</taxon>
        <taxon>Chordata</taxon>
        <taxon>Craniata</taxon>
        <taxon>Vertebrata</taxon>
        <taxon>Euteleostomi</taxon>
        <taxon>Amphibia</taxon>
        <taxon>Batrachia</taxon>
        <taxon>Anura</taxon>
        <taxon>Pipoidea</taxon>
        <taxon>Pipidae</taxon>
        <taxon>Xenopodinae</taxon>
        <taxon>Xenopus</taxon>
        <taxon>Xenopus</taxon>
    </lineage>
</organism>
<gene>
    <name type="primary">samm50-a</name>
</gene>
<comment type="function">
    <text evidence="2">May play a role in the maintenance of the structure of mitochondrial cristae.</text>
</comment>
<comment type="subunit">
    <text evidence="2">Associates with the mitochondrial contact site and cristae organizing system (MICOS) complex (also known as MINOS or MitOS complex).</text>
</comment>
<comment type="subcellular location">
    <subcellularLocation>
        <location evidence="2">Mitochondrion outer membrane</location>
        <topology evidence="1">Multi-pass membrane protein</topology>
    </subcellularLocation>
</comment>
<comment type="domain">
    <text evidence="1">Its C-terminal part seems to contain many membrane-spanning sided beta-sheets, that have the potential to adopt a transmembrane beta-barrel type structure.</text>
</comment>
<comment type="similarity">
    <text evidence="5">Belongs to the SAM50/omp85 family.</text>
</comment>
<evidence type="ECO:0000250" key="1"/>
<evidence type="ECO:0000250" key="2">
    <source>
        <dbReference type="UniProtKB" id="Q9Y512"/>
    </source>
</evidence>
<evidence type="ECO:0000255" key="3">
    <source>
        <dbReference type="PROSITE-ProRule" id="PRU01115"/>
    </source>
</evidence>
<evidence type="ECO:0000256" key="4">
    <source>
        <dbReference type="SAM" id="MobiDB-lite"/>
    </source>
</evidence>
<evidence type="ECO:0000305" key="5"/>
<reference key="1">
    <citation type="submission" date="2003-02" db="EMBL/GenBank/DDBJ databases">
        <authorList>
            <consortium name="NIH - Xenopus Gene Collection (XGC) project"/>
        </authorList>
    </citation>
    <scope>NUCLEOTIDE SEQUENCE [LARGE SCALE MRNA]</scope>
    <source>
        <tissue>Embryo</tissue>
    </source>
</reference>
<sequence>MGTVHARSLDPLPMNGPDFGSPDDADLVEVEPQKKQEILENKDVVVQRVHFEGLGRTKDDLVAHEIGQVFKAKNLIEVMRKSHEAREKLLRLGVFRNVEVLIDTCEGEDAVPNGLDVTFEVTELRRVTGSYNTMVGNNEGSMVLGLKLPNLFGRAEKMTFQFSYGTKETSYGLSFFKPQVGNFERNFSVNLYKVTGQFPWSSLRETDRGVSAEINFPIWKTSHTLKWEGVWRELGCLARTASFTIREESGHTLKSSLSHSMVIDSRNASILPKSGALLKINQELAGYTGGDVSFLKEDFELQLNRQLTWDSVLSTSLWGGMLVPIGDRPSSIADRFYLGGPTSVRGFSMYSIGPQSEGDYLGGEAYWAGGVHLYTPLPFRPGRGGFGDLFRTHFFLNAGNLCNLNYGEGPGAHLRRLAECIRWSYGAGLVLRLGNIARLELNYCIPMGVQSGDRICDGVQFGAGIRFL</sequence>
<accession>Q7ZWS5</accession>
<protein>
    <recommendedName>
        <fullName>Sorting and assembly machinery component 50 homolog A</fullName>
    </recommendedName>
</protein>